<evidence type="ECO:0000250" key="1">
    <source>
        <dbReference type="UniProtKB" id="Q6SZW1"/>
    </source>
</evidence>
<evidence type="ECO:0000255" key="2"/>
<evidence type="ECO:0000255" key="3">
    <source>
        <dbReference type="PROSITE-ProRule" id="PRU00184"/>
    </source>
</evidence>
<evidence type="ECO:0000255" key="4">
    <source>
        <dbReference type="PROSITE-ProRule" id="PRU00204"/>
    </source>
</evidence>
<evidence type="ECO:0000256" key="5">
    <source>
        <dbReference type="SAM" id="MobiDB-lite"/>
    </source>
</evidence>
<evidence type="ECO:0000269" key="6">
    <source>
    </source>
</evidence>
<evidence type="ECO:0000269" key="7">
    <source>
    </source>
</evidence>
<evidence type="ECO:0000269" key="8">
    <source>
    </source>
</evidence>
<evidence type="ECO:0000269" key="9">
    <source>
    </source>
</evidence>
<evidence type="ECO:0000269" key="10">
    <source>
    </source>
</evidence>
<evidence type="ECO:0000269" key="11">
    <source>
    </source>
</evidence>
<evidence type="ECO:0000269" key="12">
    <source>
    </source>
</evidence>
<evidence type="ECO:0000269" key="13">
    <source>
    </source>
</evidence>
<evidence type="ECO:0000269" key="14">
    <source>
    </source>
</evidence>
<evidence type="ECO:0000269" key="15">
    <source>
    </source>
</evidence>
<evidence type="ECO:0000269" key="16">
    <source>
    </source>
</evidence>
<evidence type="ECO:0000269" key="17">
    <source>
    </source>
</evidence>
<evidence type="ECO:0000269" key="18">
    <source>
    </source>
</evidence>
<evidence type="ECO:0000269" key="19">
    <source>
    </source>
</evidence>
<evidence type="ECO:0000269" key="20">
    <source>
    </source>
</evidence>
<evidence type="ECO:0000303" key="21">
    <source>
    </source>
</evidence>
<evidence type="ECO:0000303" key="22">
    <source ref="1"/>
</evidence>
<evidence type="ECO:0000305" key="23"/>
<evidence type="ECO:0000312" key="24">
    <source>
        <dbReference type="MGI" id="MGI:2136419"/>
    </source>
</evidence>
<evidence type="ECO:0007744" key="25">
    <source>
    </source>
</evidence>
<name>SARM1_MOUSE</name>
<accession>Q6PDS3</accession>
<accession>Q5SYG5</accession>
<accession>Q5SYG6</accession>
<accession>Q6A054</accession>
<accession>Q6SZW0</accession>
<accession>Q8BRI9</accession>
<feature type="transit peptide" description="Mitochondrion" evidence="1">
    <location>
        <begin position="1"/>
        <end position="27"/>
    </location>
</feature>
<feature type="chain" id="PRO_0000097590" description="NAD(+) hydrolase SARM1">
    <location>
        <begin position="28"/>
        <end position="724"/>
    </location>
</feature>
<feature type="repeat" description="ARM 1" evidence="2">
    <location>
        <begin position="60"/>
        <end position="100"/>
    </location>
</feature>
<feature type="repeat" description="ARM 2" evidence="2">
    <location>
        <begin position="114"/>
        <end position="153"/>
    </location>
</feature>
<feature type="repeat" description="ARM 3" evidence="2">
    <location>
        <begin position="155"/>
        <end position="193"/>
    </location>
</feature>
<feature type="repeat" description="ARM 4" evidence="2">
    <location>
        <begin position="196"/>
        <end position="235"/>
    </location>
</feature>
<feature type="repeat" description="ARM 5" evidence="2">
    <location>
        <begin position="237"/>
        <end position="280"/>
    </location>
</feature>
<feature type="repeat" description="ARM 6" evidence="2">
    <location>
        <begin position="281"/>
        <end position="314"/>
    </location>
</feature>
<feature type="repeat" description="ARM 7" evidence="2">
    <location>
        <begin position="315"/>
        <end position="354"/>
    </location>
</feature>
<feature type="repeat" description="ARM 8" evidence="2">
    <location>
        <begin position="359"/>
        <end position="402"/>
    </location>
</feature>
<feature type="domain" description="SAM 1" evidence="3">
    <location>
        <begin position="412"/>
        <end position="476"/>
    </location>
</feature>
<feature type="domain" description="SAM 2" evidence="3">
    <location>
        <begin position="486"/>
        <end position="548"/>
    </location>
</feature>
<feature type="domain" description="TIR" evidence="4">
    <location>
        <begin position="560"/>
        <end position="703"/>
    </location>
</feature>
<feature type="region of interest" description="Disordered" evidence="5">
    <location>
        <begin position="24"/>
        <end position="56"/>
    </location>
</feature>
<feature type="region of interest" description="Disordered" evidence="5">
    <location>
        <begin position="703"/>
        <end position="724"/>
    </location>
</feature>
<feature type="compositionally biased region" description="Low complexity" evidence="5">
    <location>
        <begin position="36"/>
        <end position="45"/>
    </location>
</feature>
<feature type="compositionally biased region" description="Polar residues" evidence="5">
    <location>
        <begin position="703"/>
        <end position="716"/>
    </location>
</feature>
<feature type="active site" evidence="4">
    <location>
        <position position="642"/>
    </location>
</feature>
<feature type="binding site" evidence="1">
    <location>
        <position position="103"/>
    </location>
    <ligand>
        <name>NAD(+)</name>
        <dbReference type="ChEBI" id="CHEBI:57540"/>
        <label>1</label>
        <note>inhibitor</note>
    </ligand>
</feature>
<feature type="binding site" evidence="1">
    <location>
        <position position="110"/>
    </location>
    <ligand>
        <name>NAD(+)</name>
        <dbReference type="ChEBI" id="CHEBI:57540"/>
        <label>1</label>
        <note>inhibitor</note>
    </ligand>
</feature>
<feature type="binding site" evidence="1">
    <location>
        <begin position="149"/>
        <end position="157"/>
    </location>
    <ligand>
        <name>NAD(+)</name>
        <dbReference type="ChEBI" id="CHEBI:57540"/>
        <label>1</label>
        <note>inhibitor</note>
    </ligand>
</feature>
<feature type="binding site" evidence="1">
    <location>
        <begin position="190"/>
        <end position="193"/>
    </location>
    <ligand>
        <name>NAD(+)</name>
        <dbReference type="ChEBI" id="CHEBI:57540"/>
        <label>1</label>
        <note>inhibitor</note>
    </ligand>
</feature>
<feature type="binding site" evidence="1">
    <location>
        <begin position="569"/>
        <end position="570"/>
    </location>
    <ligand>
        <name>NAD(+)</name>
        <dbReference type="ChEBI" id="CHEBI:57540"/>
        <label>2</label>
        <note>substrate</note>
    </ligand>
</feature>
<feature type="binding site" evidence="1">
    <location>
        <position position="599"/>
    </location>
    <ligand>
        <name>NAD(+)</name>
        <dbReference type="ChEBI" id="CHEBI:57540"/>
        <label>2</label>
        <note>substrate</note>
    </ligand>
</feature>
<feature type="modified residue" description="Phosphoserine" evidence="25">
    <location>
        <position position="548"/>
    </location>
</feature>
<feature type="modified residue" description="Phosphoserine" evidence="25">
    <location>
        <position position="558"/>
    </location>
</feature>
<feature type="splice variant" id="VSP_013606" description="In isoform 4." evidence="23">
    <location>
        <begin position="1"/>
        <end position="536"/>
    </location>
</feature>
<feature type="splice variant" id="VSP_013604" description="In isoform 2." evidence="21">
    <location>
        <begin position="435"/>
        <end position="439"/>
    </location>
</feature>
<feature type="splice variant" id="VSP_013607" description="In isoform 4." evidence="23">
    <original>RILSAAR</original>
    <variation>MSLSLAP</variation>
    <location>
        <begin position="537"/>
        <end position="543"/>
    </location>
</feature>
<feature type="splice variant" id="VSP_013605" description="In isoform 3." evidence="22">
    <original>R</original>
    <variation>RGHFAQTGLRSLRRPSLHDDGPRDKQWGRATLTSMSLSLAP</variation>
    <location>
        <position position="543"/>
    </location>
</feature>
<feature type="sequence conflict" description="In Ref. 1; AAR17521." evidence="23" ref="1">
    <original>V</original>
    <variation>A</variation>
    <location>
        <position position="61"/>
    </location>
</feature>
<organism>
    <name type="scientific">Mus musculus</name>
    <name type="common">Mouse</name>
    <dbReference type="NCBI Taxonomy" id="10090"/>
    <lineage>
        <taxon>Eukaryota</taxon>
        <taxon>Metazoa</taxon>
        <taxon>Chordata</taxon>
        <taxon>Craniata</taxon>
        <taxon>Vertebrata</taxon>
        <taxon>Euteleostomi</taxon>
        <taxon>Mammalia</taxon>
        <taxon>Eutheria</taxon>
        <taxon>Euarchontoglires</taxon>
        <taxon>Glires</taxon>
        <taxon>Rodentia</taxon>
        <taxon>Myomorpha</taxon>
        <taxon>Muroidea</taxon>
        <taxon>Muridae</taxon>
        <taxon>Murinae</taxon>
        <taxon>Mus</taxon>
        <taxon>Mus</taxon>
    </lineage>
</organism>
<keyword id="KW-0025">Alternative splicing</keyword>
<keyword id="KW-0966">Cell projection</keyword>
<keyword id="KW-0963">Cytoplasm</keyword>
<keyword id="KW-0221">Differentiation</keyword>
<keyword id="KW-0378">Hydrolase</keyword>
<keyword id="KW-0391">Immunity</keyword>
<keyword id="KW-0399">Innate immunity</keyword>
<keyword id="KW-0496">Mitochondrion</keyword>
<keyword id="KW-0520">NAD</keyword>
<keyword id="KW-0524">Neurogenesis</keyword>
<keyword id="KW-0597">Phosphoprotein</keyword>
<keyword id="KW-1185">Reference proteome</keyword>
<keyword id="KW-0677">Repeat</keyword>
<keyword id="KW-0770">Synapse</keyword>
<keyword id="KW-0809">Transit peptide</keyword>
<gene>
    <name evidence="22 24" type="primary">Sarm1</name>
    <name evidence="21" type="synonym">Kiaa0524</name>
</gene>
<sequence length="724" mass="79606">MVLTLLFSAYKLCRFFTMSGPRPGADRLTVPGPDRSGGASPWWAAGGRGSREVSPGVGTEVQGALERSLPELQQALSELKQASAARAVGAGLAEVFQLVEEAWLLPAVGREVAQGLCDAIRLDGGLDLLLRLLQAPELETRVQAARLLEQILVAENRDRVARIGLGVILNLAKEREPVELARSVAGILEHMFKHSEETCQRLVAAGGLDAVLYWCRRTDPALLRHCALALANCALHGGQTVQRCMVEKRAAEWLFPLAFSKEDELLRLHACLAVAVLATNKEVEREVEHSGTLALVEPLVASLDPGRFARCLVDASDTSQGRGPDDLQSLVLLLDSSRLEAQCIGAFYLCAEAAIKSLQGKTKVFSDIGAIQSLKRLVSYSTNGTTSALAKRALRLLGEEVPRRILPCVASWKEAEVQTWLQQIGFSQYCENFREQQVDGDLLLRLTDEELQTDLGMKSSITRKRFFRELTELKTFASYATCDRSNLADWLGSLDPRFRQYTYGLVSCGLDRSLLHRVSEQQLLEDCGIRLGVHRTRILSAAREMLHSPLPCTGGKLSGDTPDVFISYRRNSGSQLASLLKVHLQLHGFSVFIDVEKLEAGKFEDKLIQSVIAARNFVLVLSAGALDKCMQDHDCKDWVHKEIVTALSCGKNIVPIIDGFEWPEPQALPEDMQAVLTFNGIKWSHEYQEATIEKIIRFLQGRPSQDSSAGSDTSLEGATPMGLP</sequence>
<proteinExistence type="evidence at protein level"/>
<comment type="function">
    <text evidence="1 6 7 8 9 10 11 12 14 16 19">NAD(+) hydrolase, which plays a key role in axonal degeneration following injury by regulating NAD(+) metabolism (PubMed:25818290, PubMed:26686637, PubMed:27735788, PubMed:32312889). Acts as a negative regulator of MYD88- and TRIF-dependent toll-like receptor signaling pathway by promoting Wallerian degeneration, an injury-induced form of programmed subcellular death which involves degeneration of an axon distal to the injury site (PubMed:21555464, PubMed:22678360, PubMed:25818290, PubMed:26423149, PubMed:26686637). Wallerian degeneration is triggered by NAD(+) depletion: in response to injury, SARM1 is activated and catalyzes cleavage of NAD(+) into ADP-D-ribose (ADPR), cyclic ADPR (cADPR) and nicotinamide; NAD(+) cleavage promoting cytoskeletal degradation and axon destruction (PubMed:28334607). Also able to hydrolyze NADP(+), but not other NAD(+)-related molecules (By similarity). Can activate neuronal cell death in response to stress (PubMed:19587044). Regulates dendritic arborization through the MAPK4-JNK pathway (PubMed:17724133, PubMed:21555464). Involved in innate immune response: inhibits both TICAM1/TRIF- and MYD88-dependent activation of JUN/AP-1, TRIF-dependent activation of NF-kappa-B and IRF3, and the phosphorylation of MAPK14/p38 (PubMed:21555464).</text>
</comment>
<comment type="catalytic activity">
    <reaction evidence="16">
        <text>NAD(+) + H2O = ADP-D-ribose + nicotinamide + H(+)</text>
        <dbReference type="Rhea" id="RHEA:16301"/>
        <dbReference type="ChEBI" id="CHEBI:15377"/>
        <dbReference type="ChEBI" id="CHEBI:15378"/>
        <dbReference type="ChEBI" id="CHEBI:17154"/>
        <dbReference type="ChEBI" id="CHEBI:57540"/>
        <dbReference type="ChEBI" id="CHEBI:57967"/>
        <dbReference type="EC" id="3.2.2.6"/>
    </reaction>
    <physiologicalReaction direction="left-to-right" evidence="16">
        <dbReference type="Rhea" id="RHEA:16302"/>
    </physiologicalReaction>
</comment>
<comment type="catalytic activity">
    <reaction evidence="1">
        <text>NAD(+) = cyclic ADP-beta-D-ribose + nicotinamide + H(+)</text>
        <dbReference type="Rhea" id="RHEA:38611"/>
        <dbReference type="ChEBI" id="CHEBI:15378"/>
        <dbReference type="ChEBI" id="CHEBI:17154"/>
        <dbReference type="ChEBI" id="CHEBI:57540"/>
        <dbReference type="ChEBI" id="CHEBI:73672"/>
    </reaction>
    <physiologicalReaction direction="left-to-right" evidence="1">
        <dbReference type="Rhea" id="RHEA:38612"/>
    </physiologicalReaction>
</comment>
<comment type="catalytic activity">
    <reaction evidence="1">
        <text>NADP(+) + H2O = ADP-D-ribose 2'-phosphate + nicotinamide + H(+)</text>
        <dbReference type="Rhea" id="RHEA:19849"/>
        <dbReference type="ChEBI" id="CHEBI:15377"/>
        <dbReference type="ChEBI" id="CHEBI:15378"/>
        <dbReference type="ChEBI" id="CHEBI:17154"/>
        <dbReference type="ChEBI" id="CHEBI:58349"/>
        <dbReference type="ChEBI" id="CHEBI:58673"/>
    </reaction>
    <physiologicalReaction direction="left-to-right" evidence="1">
        <dbReference type="Rhea" id="RHEA:19850"/>
    </physiologicalReaction>
</comment>
<comment type="activity regulation">
    <text evidence="1">Autoinhibited: in the inactive state, the enzymatic TIR domain is held apart by the autoinhibiting ARM repeats. NAD(+)-binding to ARM repeats maintains an inactive state by promoting interaction between ARM repeats and the TIR domain, thereby facilitating inhibition of the enzymatic TIR domain. Following activation, possibly by nicotinamide mononucleotide (NMN), auto-inhibitory interactions are released, allowing self-association of the TIR domains and subsequent activation of the NAD(+) hydrolase (NADase) activity. Self-association of TIR domains is facilitated by the octamer of SAM domains.</text>
</comment>
<comment type="subunit">
    <text evidence="1 6 8">Homooctamer; forms an octameric ring via SAM domains (By similarity). Interacts with TICAM1/TRIF and thereby interferes with TICAM1/TRIF function (By similarity). Interacts with SDC2 (via cytoplasmic domain) and MAPK10/JNK3 (PubMed:17724133, PubMed:21555464).</text>
</comment>
<comment type="interaction">
    <interactant intactId="EBI-6117196">
        <id>Q6PDS3</id>
    </interactant>
    <interactant intactId="EBI-720151">
        <id>Q96A33</id>
        <label>CCDC47</label>
    </interactant>
    <organismsDiffer>true</organismsDiffer>
    <experiments>2</experiments>
</comment>
<comment type="interaction">
    <interactant intactId="EBI-6117196">
        <id>Q6PDS3</id>
    </interactant>
    <interactant intactId="EBI-2868909">
        <id>Q9H3K2</id>
        <label>GHITM</label>
    </interactant>
    <organismsDiffer>true</organismsDiffer>
    <experiments>2</experiments>
</comment>
<comment type="interaction">
    <interactant intactId="EBI-6117196">
        <id>Q6PDS3</id>
    </interactant>
    <interactant intactId="EBI-447733">
        <id>O43187</id>
        <label>IRAK2</label>
    </interactant>
    <organismsDiffer>true</organismsDiffer>
    <experiments>2</experiments>
</comment>
<comment type="interaction">
    <interactant intactId="EBI-6117196">
        <id>Q6PDS3</id>
    </interactant>
    <interactant intactId="EBI-3893071">
        <id>Q86UT6</id>
        <label>NLRX1</label>
    </interactant>
    <organismsDiffer>true</organismsDiffer>
    <experiments>2</experiments>
</comment>
<comment type="interaction">
    <interactant intactId="EBI-6117196">
        <id>Q6PDS3</id>
    </interactant>
    <interactant intactId="EBI-719212">
        <id>P46977</id>
        <label>STT3A</label>
    </interactant>
    <organismsDiffer>true</organismsDiffer>
    <experiments>2</experiments>
</comment>
<comment type="subcellular location">
    <subcellularLocation>
        <location evidence="6">Cytoplasm</location>
    </subcellularLocation>
    <subcellularLocation>
        <location evidence="9">Cell projection</location>
        <location evidence="9">Axon</location>
    </subcellularLocation>
    <subcellularLocation>
        <location evidence="8">Cell projection</location>
        <location evidence="8">Dendrite</location>
    </subcellularLocation>
    <subcellularLocation>
        <location evidence="9">Synapse</location>
    </subcellularLocation>
    <subcellularLocation>
        <location evidence="6 11">Mitochondrion</location>
    </subcellularLocation>
    <text evidence="6">Associated with microtubules.</text>
</comment>
<comment type="alternative products">
    <event type="alternative splicing"/>
    <isoform>
        <id>Q6PDS3-1</id>
        <name>1</name>
        <sequence type="displayed"/>
    </isoform>
    <isoform>
        <id>Q6PDS3-2</id>
        <name>2</name>
        <sequence type="described" ref="VSP_013604"/>
    </isoform>
    <isoform>
        <id>Q6PDS3-3</id>
        <name>3</name>
        <sequence type="described" ref="VSP_013605"/>
    </isoform>
    <isoform>
        <id>Q6PDS3-4</id>
        <name>4</name>
        <sequence type="described" ref="VSP_013606 VSP_013607"/>
    </isoform>
</comment>
<comment type="tissue specificity">
    <text evidence="8 19">Widely expressed in the brain and neurons (at protein level) (PubMed:21555464). Expressed in photoreceptor cells of the neural retina (PubMed:32312889).</text>
</comment>
<comment type="induction">
    <text evidence="18">Down-regulated in sciatic nerve of mice with diabetic peripheral neuropathy (at protein level).</text>
</comment>
<comment type="domain">
    <text evidence="1">The TIR domain mediates NAD(+) hydrolase (NADase) activity. Self-association of TIR domains is required for NADase activity.</text>
</comment>
<comment type="domain">
    <text evidence="1">The ARM repeats inhibit the NAD(+) hydrolase (NADase) activity by binding to NAD(+): NAD(+)-binding to ARM repeats facilitates inhibition of the TIR domain NADase through their domain interface. In contrast to classical ARM repeats, the last helix of ARM 6 does not fold back to interact with the first two helices, but instead turns towards the N-terminus of SARM1. As a result, the two following motifs ARM 7 and ARM 8 reverse their directions and lie perpendicularly. Moreover, ARM repeats interact with different domains not only within each protomer but also of the adjacent ones.</text>
</comment>
<comment type="PTM">
    <text evidence="1">Phosphorylation at Ser-548 by JNK kinases (MAPK8, MAPK9 and /or MAPK10) enhance the NAD(+) hydrolase (NADase) activity. Phosphorylation at Ser-548 and subsequent activation takes place in response to oxidative stress conditions and inhibits mitochondrial respiration.</text>
</comment>
<comment type="disruption phenotype">
    <text evidence="9 10 13 15 17 18 19 20">Absence of Sarm1 provides a level of protection against axon degeneration (PubMed:22678360, PubMed:26912636, PubMed:28978465). Genetic deletion blocks Wallerian degeneration of sciatic nerve and cultured superior cervical ganglia and peripheral polyneuropathy induced by vincristine (PubMed:22678360, PubMed:27797810). Severed Sarm1 null axons are able to persist up to 72 hours after axotomy, whereas wild-type axons degenerate within 8 hours (PubMed:22678360). Similarly, axons appear to be protected from degeneration in a sciatic nerve lesion model, lasting up to 14 days compared with 3 days for wild type (PubMed:22678360). Mice display improved traumatic brain injury-associated phenotypes after injury: mice develop fewer beta-amyloid precursor protein aggregates in axons of the corpus callosum after traumatic brain injury and show improved axonal integrity (PubMed:26912636). Mice show some protection against early but not late axonal degeneration in experimental allergic encephalomyelitis mouse model (PubMed:32584865). Mice exhibit normal glucose metabolism and pain sensitivity but show attenuated diabetic peripheral neuropathy (PubMed:31439642). Mice lacking both Sarm1 and Nmnat2 are viable and survive: Sarm1 deficiency corrects axon outgrowth in mice lacking Nmnat2, independently of NMNAT metabolites, preventing perinatal lethality (PubMed:25818290). Mice lacking both Rho and Sarm1 show a level of protection against retinal degeneration induced by the absence of Rho: the absence of Sarm1 promoting rod and cone photoreceptor cell survival (PubMed:32312889).</text>
</comment>
<comment type="similarity">
    <text evidence="23">Belongs to the SARM1 family.</text>
</comment>
<comment type="sequence caution" evidence="23">
    <conflict type="erroneous initiation">
        <sequence resource="EMBL-CDS" id="BAD32242"/>
    </conflict>
</comment>
<comment type="sequence caution" evidence="23">
    <conflict type="erroneous gene model prediction">
        <sequence resource="EMBL-CDS" id="CAI25546"/>
    </conflict>
</comment>
<dbReference type="EC" id="3.2.2.6" evidence="16"/>
<dbReference type="EC" id="3.2.2.-" evidence="1"/>
<dbReference type="EMBL" id="AY444167">
    <property type="protein sequence ID" value="AAR17521.1"/>
    <property type="molecule type" value="mRNA"/>
</dbReference>
<dbReference type="EMBL" id="AK172964">
    <property type="protein sequence ID" value="BAD32242.1"/>
    <property type="status" value="ALT_INIT"/>
    <property type="molecule type" value="Transcribed_RNA"/>
</dbReference>
<dbReference type="EMBL" id="AK044113">
    <property type="protein sequence ID" value="BAC31784.1"/>
    <property type="molecule type" value="mRNA"/>
</dbReference>
<dbReference type="EMBL" id="AL591177">
    <property type="protein sequence ID" value="CAI25544.1"/>
    <property type="molecule type" value="Genomic_DNA"/>
</dbReference>
<dbReference type="EMBL" id="AL591177">
    <property type="protein sequence ID" value="CAI25545.1"/>
    <property type="molecule type" value="Genomic_DNA"/>
</dbReference>
<dbReference type="EMBL" id="AL591177">
    <property type="protein sequence ID" value="CAI25546.1"/>
    <property type="status" value="ALT_SEQ"/>
    <property type="molecule type" value="Genomic_DNA"/>
</dbReference>
<dbReference type="EMBL" id="BC058534">
    <property type="protein sequence ID" value="AAH58534.1"/>
    <property type="molecule type" value="mRNA"/>
</dbReference>
<dbReference type="EMBL" id="BC080850">
    <property type="protein sequence ID" value="AAH80850.1"/>
    <property type="molecule type" value="mRNA"/>
</dbReference>
<dbReference type="CCDS" id="CCDS25105.1">
    <molecule id="Q6PDS3-1"/>
</dbReference>
<dbReference type="CCDS" id="CCDS48857.1">
    <molecule id="Q6PDS3-3"/>
</dbReference>
<dbReference type="RefSeq" id="NP_001161993.1">
    <molecule id="Q6PDS3-3"/>
    <property type="nucleotide sequence ID" value="NM_001168521.1"/>
</dbReference>
<dbReference type="RefSeq" id="NP_766383.2">
    <molecule id="Q6PDS3-1"/>
    <property type="nucleotide sequence ID" value="NM_172795.3"/>
</dbReference>
<dbReference type="SMR" id="Q6PDS3"/>
<dbReference type="BioGRID" id="231917">
    <property type="interactions" value="3"/>
</dbReference>
<dbReference type="FunCoup" id="Q6PDS3">
    <property type="interactions" value="744"/>
</dbReference>
<dbReference type="IntAct" id="Q6PDS3">
    <property type="interactions" value="11"/>
</dbReference>
<dbReference type="STRING" id="10090.ENSMUSP00000103922"/>
<dbReference type="ChEMBL" id="CHEMBL4523348"/>
<dbReference type="GlyGen" id="Q6PDS3">
    <property type="glycosylation" value="2 sites, 1 N-linked glycan (1 site), 1 O-linked glycan (1 site)"/>
</dbReference>
<dbReference type="iPTMnet" id="Q6PDS3"/>
<dbReference type="PhosphoSitePlus" id="Q6PDS3"/>
<dbReference type="PaxDb" id="10090-ENSMUSP00000103922"/>
<dbReference type="PeptideAtlas" id="Q6PDS3"/>
<dbReference type="ProteomicsDB" id="256727">
    <molecule id="Q6PDS3-1"/>
</dbReference>
<dbReference type="ProteomicsDB" id="256728">
    <molecule id="Q6PDS3-2"/>
</dbReference>
<dbReference type="ProteomicsDB" id="256729">
    <molecule id="Q6PDS3-3"/>
</dbReference>
<dbReference type="ProteomicsDB" id="256730">
    <molecule id="Q6PDS3-4"/>
</dbReference>
<dbReference type="Pumba" id="Q6PDS3"/>
<dbReference type="Antibodypedia" id="14061">
    <property type="antibodies" value="201 antibodies from 34 providers"/>
</dbReference>
<dbReference type="DNASU" id="237868"/>
<dbReference type="Ensembl" id="ENSMUST00000061174.7">
    <molecule id="Q6PDS3-1"/>
    <property type="protein sequence ID" value="ENSMUSP00000051059.7"/>
    <property type="gene ID" value="ENSMUSG00000050132.14"/>
</dbReference>
<dbReference type="Ensembl" id="ENSMUST00000108287.10">
    <molecule id="Q6PDS3-3"/>
    <property type="protein sequence ID" value="ENSMUSP00000103922.4"/>
    <property type="gene ID" value="ENSMUSG00000050132.14"/>
</dbReference>
<dbReference type="GeneID" id="237868"/>
<dbReference type="KEGG" id="mmu:237868"/>
<dbReference type="UCSC" id="uc007kjh.2">
    <molecule id="Q6PDS3-4"/>
    <property type="organism name" value="mouse"/>
</dbReference>
<dbReference type="UCSC" id="uc007kji.2">
    <molecule id="Q6PDS3-1"/>
    <property type="organism name" value="mouse"/>
</dbReference>
<dbReference type="UCSC" id="uc007kjj.2">
    <molecule id="Q6PDS3-3"/>
    <property type="organism name" value="mouse"/>
</dbReference>
<dbReference type="AGR" id="MGI:2136419"/>
<dbReference type="CTD" id="23098"/>
<dbReference type="MGI" id="MGI:2136419">
    <property type="gene designation" value="Sarm1"/>
</dbReference>
<dbReference type="VEuPathDB" id="HostDB:ENSMUSG00000050132"/>
<dbReference type="eggNOG" id="KOG3678">
    <property type="taxonomic scope" value="Eukaryota"/>
</dbReference>
<dbReference type="GeneTree" id="ENSGT00390000004155"/>
<dbReference type="HOGENOM" id="CLU_003286_2_0_1"/>
<dbReference type="InParanoid" id="Q6PDS3"/>
<dbReference type="OMA" id="KSCEVQT"/>
<dbReference type="OrthoDB" id="58681at9989"/>
<dbReference type="PhylomeDB" id="Q6PDS3"/>
<dbReference type="TreeFam" id="TF315263"/>
<dbReference type="Reactome" id="R-MMU-166166">
    <property type="pathway name" value="MyD88-independent TLR4 cascade"/>
</dbReference>
<dbReference type="Reactome" id="R-MMU-936964">
    <property type="pathway name" value="Activation of IRF3, IRF7 mediated by TBK1, IKKEpsilon (IKBKE)"/>
</dbReference>
<dbReference type="Reactome" id="R-MMU-937041">
    <property type="pathway name" value="IKK complex recruitment mediated by RIP1"/>
</dbReference>
<dbReference type="Reactome" id="R-MMU-937072">
    <property type="pathway name" value="TRAF6-mediated induction of TAK1 complex within TLR4 complex"/>
</dbReference>
<dbReference type="BioGRID-ORCS" id="237868">
    <property type="hits" value="1 hit in 76 CRISPR screens"/>
</dbReference>
<dbReference type="CD-CODE" id="CE726F99">
    <property type="entry name" value="Postsynaptic density"/>
</dbReference>
<dbReference type="ChiTaRS" id="Sarm1">
    <property type="organism name" value="mouse"/>
</dbReference>
<dbReference type="PRO" id="PR:Q6PDS3"/>
<dbReference type="Proteomes" id="UP000000589">
    <property type="component" value="Chromosome 11"/>
</dbReference>
<dbReference type="RNAct" id="Q6PDS3">
    <property type="molecule type" value="protein"/>
</dbReference>
<dbReference type="Bgee" id="ENSMUSG00000050132">
    <property type="expression patterns" value="Expressed in superior cervical ganglion and 80 other cell types or tissues"/>
</dbReference>
<dbReference type="GO" id="GO:0030424">
    <property type="term" value="C:axon"/>
    <property type="evidence" value="ECO:0007669"/>
    <property type="project" value="UniProtKB-SubCell"/>
</dbReference>
<dbReference type="GO" id="GO:0009986">
    <property type="term" value="C:cell surface"/>
    <property type="evidence" value="ECO:0000314"/>
    <property type="project" value="MGI"/>
</dbReference>
<dbReference type="GO" id="GO:0005737">
    <property type="term" value="C:cytoplasm"/>
    <property type="evidence" value="ECO:0000314"/>
    <property type="project" value="UniProtKB"/>
</dbReference>
<dbReference type="GO" id="GO:0030425">
    <property type="term" value="C:dendrite"/>
    <property type="evidence" value="ECO:0000315"/>
    <property type="project" value="UniProtKB"/>
</dbReference>
<dbReference type="GO" id="GO:0099243">
    <property type="term" value="C:extrinsic component of synaptic membrane"/>
    <property type="evidence" value="ECO:0007669"/>
    <property type="project" value="Ensembl"/>
</dbReference>
<dbReference type="GO" id="GO:0098978">
    <property type="term" value="C:glutamatergic synapse"/>
    <property type="evidence" value="ECO:0007669"/>
    <property type="project" value="Ensembl"/>
</dbReference>
<dbReference type="GO" id="GO:0005874">
    <property type="term" value="C:microtubule"/>
    <property type="evidence" value="ECO:0000314"/>
    <property type="project" value="UniProtKB"/>
</dbReference>
<dbReference type="GO" id="GO:0015630">
    <property type="term" value="C:microtubule cytoskeleton"/>
    <property type="evidence" value="ECO:0000314"/>
    <property type="project" value="MGI"/>
</dbReference>
<dbReference type="GO" id="GO:0005741">
    <property type="term" value="C:mitochondrial outer membrane"/>
    <property type="evidence" value="ECO:0000314"/>
    <property type="project" value="MGI"/>
</dbReference>
<dbReference type="GO" id="GO:0005739">
    <property type="term" value="C:mitochondrion"/>
    <property type="evidence" value="ECO:0000314"/>
    <property type="project" value="UniProtKB"/>
</dbReference>
<dbReference type="GO" id="GO:0031594">
    <property type="term" value="C:neuromuscular junction"/>
    <property type="evidence" value="ECO:0000314"/>
    <property type="project" value="SynGO"/>
</dbReference>
<dbReference type="GO" id="GO:0032991">
    <property type="term" value="C:protein-containing complex"/>
    <property type="evidence" value="ECO:0000314"/>
    <property type="project" value="MGI"/>
</dbReference>
<dbReference type="GO" id="GO:0045202">
    <property type="term" value="C:synapse"/>
    <property type="evidence" value="ECO:0000314"/>
    <property type="project" value="UniProtKB"/>
</dbReference>
<dbReference type="GO" id="GO:0003953">
    <property type="term" value="F:NAD+ nucleosidase activity"/>
    <property type="evidence" value="ECO:0000314"/>
    <property type="project" value="UniProtKB"/>
</dbReference>
<dbReference type="GO" id="GO:0061809">
    <property type="term" value="F:NAD+ nucleosidase activity, cyclic ADP-ribose generating"/>
    <property type="evidence" value="ECO:0000250"/>
    <property type="project" value="UniProtKB"/>
</dbReference>
<dbReference type="GO" id="GO:0050135">
    <property type="term" value="F:NADP+ nucleosidase activity"/>
    <property type="evidence" value="ECO:0007669"/>
    <property type="project" value="RHEA"/>
</dbReference>
<dbReference type="GO" id="GO:0035591">
    <property type="term" value="F:signaling adaptor activity"/>
    <property type="evidence" value="ECO:0007669"/>
    <property type="project" value="InterPro"/>
</dbReference>
<dbReference type="GO" id="GO:0030154">
    <property type="term" value="P:cell differentiation"/>
    <property type="evidence" value="ECO:0007669"/>
    <property type="project" value="UniProtKB-KW"/>
</dbReference>
<dbReference type="GO" id="GO:0045087">
    <property type="term" value="P:innate immune response"/>
    <property type="evidence" value="ECO:0007669"/>
    <property type="project" value="UniProtKB-KW"/>
</dbReference>
<dbReference type="GO" id="GO:0099010">
    <property type="term" value="P:modification of postsynaptic structure"/>
    <property type="evidence" value="ECO:0007669"/>
    <property type="project" value="Ensembl"/>
</dbReference>
<dbReference type="GO" id="GO:0019677">
    <property type="term" value="P:NAD catabolic process"/>
    <property type="evidence" value="ECO:0000314"/>
    <property type="project" value="UniProtKB"/>
</dbReference>
<dbReference type="GO" id="GO:0034128">
    <property type="term" value="P:negative regulation of MyD88-independent toll-like receptor signaling pathway"/>
    <property type="evidence" value="ECO:0007669"/>
    <property type="project" value="InterPro"/>
</dbReference>
<dbReference type="GO" id="GO:0007399">
    <property type="term" value="P:nervous system development"/>
    <property type="evidence" value="ECO:0007669"/>
    <property type="project" value="UniProtKB-KW"/>
</dbReference>
<dbReference type="GO" id="GO:0050877">
    <property type="term" value="P:nervous system process"/>
    <property type="evidence" value="ECO:0000315"/>
    <property type="project" value="UniProtKB"/>
</dbReference>
<dbReference type="GO" id="GO:0070585">
    <property type="term" value="P:protein localization to mitochondrion"/>
    <property type="evidence" value="ECO:0000315"/>
    <property type="project" value="UniProtKB"/>
</dbReference>
<dbReference type="GO" id="GO:0048814">
    <property type="term" value="P:regulation of dendrite morphogenesis"/>
    <property type="evidence" value="ECO:0000315"/>
    <property type="project" value="UniProtKB"/>
</dbReference>
<dbReference type="GO" id="GO:0043523">
    <property type="term" value="P:regulation of neuron apoptotic process"/>
    <property type="evidence" value="ECO:0000315"/>
    <property type="project" value="MGI"/>
</dbReference>
<dbReference type="GO" id="GO:1905806">
    <property type="term" value="P:regulation of synapse pruning"/>
    <property type="evidence" value="ECO:0000314"/>
    <property type="project" value="SynGO"/>
</dbReference>
<dbReference type="GO" id="GO:0048678">
    <property type="term" value="P:response to axon injury"/>
    <property type="evidence" value="ECO:0000250"/>
    <property type="project" value="UniProtKB"/>
</dbReference>
<dbReference type="GO" id="GO:0009749">
    <property type="term" value="P:response to glucose"/>
    <property type="evidence" value="ECO:0000315"/>
    <property type="project" value="MGI"/>
</dbReference>
<dbReference type="GO" id="GO:0007165">
    <property type="term" value="P:signal transduction"/>
    <property type="evidence" value="ECO:0007669"/>
    <property type="project" value="InterPro"/>
</dbReference>
<dbReference type="CDD" id="cd09501">
    <property type="entry name" value="SAM_SARM1-like_repeat1"/>
    <property type="match status" value="1"/>
</dbReference>
<dbReference type="CDD" id="cd09502">
    <property type="entry name" value="SAM_SARM1-like_repeat2"/>
    <property type="match status" value="1"/>
</dbReference>
<dbReference type="CDD" id="cd24153">
    <property type="entry name" value="SARM1_N"/>
    <property type="match status" value="1"/>
</dbReference>
<dbReference type="FunFam" id="1.10.150.50:FF:000062">
    <property type="entry name" value="Sterile alpha and TIR motif containing 1"/>
    <property type="match status" value="1"/>
</dbReference>
<dbReference type="FunFam" id="3.40.50.10140:FF:000013">
    <property type="entry name" value="Sterile alpha and TIR motif containing 1"/>
    <property type="match status" value="1"/>
</dbReference>
<dbReference type="FunFam" id="1.10.150.50:FF:000043">
    <property type="entry name" value="Sterile alpha and TIR motif-containing 1"/>
    <property type="match status" value="1"/>
</dbReference>
<dbReference type="FunFam" id="1.25.10.10:FF:000397">
    <property type="entry name" value="sterile alpha and TIR motif-containing protein 1"/>
    <property type="match status" value="1"/>
</dbReference>
<dbReference type="Gene3D" id="1.25.10.10">
    <property type="entry name" value="Leucine-rich Repeat Variant"/>
    <property type="match status" value="1"/>
</dbReference>
<dbReference type="Gene3D" id="3.40.50.10140">
    <property type="entry name" value="Toll/interleukin-1 receptor homology (TIR) domain"/>
    <property type="match status" value="1"/>
</dbReference>
<dbReference type="Gene3D" id="1.10.150.50">
    <property type="entry name" value="Transcription Factor, Ets-1"/>
    <property type="match status" value="2"/>
</dbReference>
<dbReference type="InterPro" id="IPR011989">
    <property type="entry name" value="ARM-like"/>
</dbReference>
<dbReference type="InterPro" id="IPR016024">
    <property type="entry name" value="ARM-type_fold"/>
</dbReference>
<dbReference type="InterPro" id="IPR001660">
    <property type="entry name" value="SAM"/>
</dbReference>
<dbReference type="InterPro" id="IPR013761">
    <property type="entry name" value="SAM/pointed_sf"/>
</dbReference>
<dbReference type="InterPro" id="IPR039184">
    <property type="entry name" value="SARM1"/>
</dbReference>
<dbReference type="InterPro" id="IPR000157">
    <property type="entry name" value="TIR_dom"/>
</dbReference>
<dbReference type="InterPro" id="IPR035897">
    <property type="entry name" value="Toll_tir_struct_dom_sf"/>
</dbReference>
<dbReference type="PANTHER" id="PTHR22998:SF1">
    <property type="entry name" value="NAD(+) HYDROLASE SARM1"/>
    <property type="match status" value="1"/>
</dbReference>
<dbReference type="PANTHER" id="PTHR22998">
    <property type="entry name" value="SARM1"/>
    <property type="match status" value="1"/>
</dbReference>
<dbReference type="Pfam" id="PF07647">
    <property type="entry name" value="SAM_2"/>
    <property type="match status" value="2"/>
</dbReference>
<dbReference type="Pfam" id="PF13676">
    <property type="entry name" value="TIR_2"/>
    <property type="match status" value="1"/>
</dbReference>
<dbReference type="SMART" id="SM00454">
    <property type="entry name" value="SAM"/>
    <property type="match status" value="2"/>
</dbReference>
<dbReference type="SMART" id="SM00255">
    <property type="entry name" value="TIR"/>
    <property type="match status" value="1"/>
</dbReference>
<dbReference type="SUPFAM" id="SSF48371">
    <property type="entry name" value="ARM repeat"/>
    <property type="match status" value="1"/>
</dbReference>
<dbReference type="SUPFAM" id="SSF47769">
    <property type="entry name" value="SAM/Pointed domain"/>
    <property type="match status" value="2"/>
</dbReference>
<dbReference type="SUPFAM" id="SSF52200">
    <property type="entry name" value="Toll/Interleukin receptor TIR domain"/>
    <property type="match status" value="1"/>
</dbReference>
<dbReference type="PROSITE" id="PS50105">
    <property type="entry name" value="SAM_DOMAIN"/>
    <property type="match status" value="2"/>
</dbReference>
<dbReference type="PROSITE" id="PS50104">
    <property type="entry name" value="TIR"/>
    <property type="match status" value="1"/>
</dbReference>
<reference key="1">
    <citation type="submission" date="2003-10" db="EMBL/GenBank/DDBJ databases">
        <title>SARM1 isoforms nucleotide sequence.</title>
        <authorList>
            <person name="Bousson J.-C."/>
            <person name="Casteran C."/>
            <person name="Tiraby G."/>
        </authorList>
    </citation>
    <scope>NUCLEOTIDE SEQUENCE [MRNA] (ISOFORM 3)</scope>
</reference>
<reference key="2">
    <citation type="journal article" date="2004" name="DNA Res.">
        <title>Prediction of the coding sequences of mouse homologues of KIAA gene: IV. The complete nucleotide sequences of 500 mouse KIAA-homologous cDNAs identified by screening of terminal sequences of cDNA clones randomly sampled from size-fractionated libraries.</title>
        <authorList>
            <person name="Okazaki N."/>
            <person name="Kikuno R."/>
            <person name="Ohara R."/>
            <person name="Inamoto S."/>
            <person name="Koseki H."/>
            <person name="Hiraoka S."/>
            <person name="Saga Y."/>
            <person name="Seino S."/>
            <person name="Nishimura M."/>
            <person name="Kaisho T."/>
            <person name="Hoshino K."/>
            <person name="Kitamura H."/>
            <person name="Nagase T."/>
            <person name="Ohara O."/>
            <person name="Koga H."/>
        </authorList>
    </citation>
    <scope>NUCLEOTIDE SEQUENCE [LARGE SCALE MRNA] (ISOFORM 2)</scope>
    <source>
        <tissue>Pancreatic islet</tissue>
    </source>
</reference>
<reference key="3">
    <citation type="journal article" date="2005" name="Science">
        <title>The transcriptional landscape of the mammalian genome.</title>
        <authorList>
            <person name="Carninci P."/>
            <person name="Kasukawa T."/>
            <person name="Katayama S."/>
            <person name="Gough J."/>
            <person name="Frith M.C."/>
            <person name="Maeda N."/>
            <person name="Oyama R."/>
            <person name="Ravasi T."/>
            <person name="Lenhard B."/>
            <person name="Wells C."/>
            <person name="Kodzius R."/>
            <person name="Shimokawa K."/>
            <person name="Bajic V.B."/>
            <person name="Brenner S.E."/>
            <person name="Batalov S."/>
            <person name="Forrest A.R."/>
            <person name="Zavolan M."/>
            <person name="Davis M.J."/>
            <person name="Wilming L.G."/>
            <person name="Aidinis V."/>
            <person name="Allen J.E."/>
            <person name="Ambesi-Impiombato A."/>
            <person name="Apweiler R."/>
            <person name="Aturaliya R.N."/>
            <person name="Bailey T.L."/>
            <person name="Bansal M."/>
            <person name="Baxter L."/>
            <person name="Beisel K.W."/>
            <person name="Bersano T."/>
            <person name="Bono H."/>
            <person name="Chalk A.M."/>
            <person name="Chiu K.P."/>
            <person name="Choudhary V."/>
            <person name="Christoffels A."/>
            <person name="Clutterbuck D.R."/>
            <person name="Crowe M.L."/>
            <person name="Dalla E."/>
            <person name="Dalrymple B.P."/>
            <person name="de Bono B."/>
            <person name="Della Gatta G."/>
            <person name="di Bernardo D."/>
            <person name="Down T."/>
            <person name="Engstrom P."/>
            <person name="Fagiolini M."/>
            <person name="Faulkner G."/>
            <person name="Fletcher C.F."/>
            <person name="Fukushima T."/>
            <person name="Furuno M."/>
            <person name="Futaki S."/>
            <person name="Gariboldi M."/>
            <person name="Georgii-Hemming P."/>
            <person name="Gingeras T.R."/>
            <person name="Gojobori T."/>
            <person name="Green R.E."/>
            <person name="Gustincich S."/>
            <person name="Harbers M."/>
            <person name="Hayashi Y."/>
            <person name="Hensch T.K."/>
            <person name="Hirokawa N."/>
            <person name="Hill D."/>
            <person name="Huminiecki L."/>
            <person name="Iacono M."/>
            <person name="Ikeo K."/>
            <person name="Iwama A."/>
            <person name="Ishikawa T."/>
            <person name="Jakt M."/>
            <person name="Kanapin A."/>
            <person name="Katoh M."/>
            <person name="Kawasawa Y."/>
            <person name="Kelso J."/>
            <person name="Kitamura H."/>
            <person name="Kitano H."/>
            <person name="Kollias G."/>
            <person name="Krishnan S.P."/>
            <person name="Kruger A."/>
            <person name="Kummerfeld S.K."/>
            <person name="Kurochkin I.V."/>
            <person name="Lareau L.F."/>
            <person name="Lazarevic D."/>
            <person name="Lipovich L."/>
            <person name="Liu J."/>
            <person name="Liuni S."/>
            <person name="McWilliam S."/>
            <person name="Madan Babu M."/>
            <person name="Madera M."/>
            <person name="Marchionni L."/>
            <person name="Matsuda H."/>
            <person name="Matsuzawa S."/>
            <person name="Miki H."/>
            <person name="Mignone F."/>
            <person name="Miyake S."/>
            <person name="Morris K."/>
            <person name="Mottagui-Tabar S."/>
            <person name="Mulder N."/>
            <person name="Nakano N."/>
            <person name="Nakauchi H."/>
            <person name="Ng P."/>
            <person name="Nilsson R."/>
            <person name="Nishiguchi S."/>
            <person name="Nishikawa S."/>
            <person name="Nori F."/>
            <person name="Ohara O."/>
            <person name="Okazaki Y."/>
            <person name="Orlando V."/>
            <person name="Pang K.C."/>
            <person name="Pavan W.J."/>
            <person name="Pavesi G."/>
            <person name="Pesole G."/>
            <person name="Petrovsky N."/>
            <person name="Piazza S."/>
            <person name="Reed J."/>
            <person name="Reid J.F."/>
            <person name="Ring B.Z."/>
            <person name="Ringwald M."/>
            <person name="Rost B."/>
            <person name="Ruan Y."/>
            <person name="Salzberg S.L."/>
            <person name="Sandelin A."/>
            <person name="Schneider C."/>
            <person name="Schoenbach C."/>
            <person name="Sekiguchi K."/>
            <person name="Semple C.A."/>
            <person name="Seno S."/>
            <person name="Sessa L."/>
            <person name="Sheng Y."/>
            <person name="Shibata Y."/>
            <person name="Shimada H."/>
            <person name="Shimada K."/>
            <person name="Silva D."/>
            <person name="Sinclair B."/>
            <person name="Sperling S."/>
            <person name="Stupka E."/>
            <person name="Sugiura K."/>
            <person name="Sultana R."/>
            <person name="Takenaka Y."/>
            <person name="Taki K."/>
            <person name="Tammoja K."/>
            <person name="Tan S.L."/>
            <person name="Tang S."/>
            <person name="Taylor M.S."/>
            <person name="Tegner J."/>
            <person name="Teichmann S.A."/>
            <person name="Ueda H.R."/>
            <person name="van Nimwegen E."/>
            <person name="Verardo R."/>
            <person name="Wei C.L."/>
            <person name="Yagi K."/>
            <person name="Yamanishi H."/>
            <person name="Zabarovsky E."/>
            <person name="Zhu S."/>
            <person name="Zimmer A."/>
            <person name="Hide W."/>
            <person name="Bult C."/>
            <person name="Grimmond S.M."/>
            <person name="Teasdale R.D."/>
            <person name="Liu E.T."/>
            <person name="Brusic V."/>
            <person name="Quackenbush J."/>
            <person name="Wahlestedt C."/>
            <person name="Mattick J.S."/>
            <person name="Hume D.A."/>
            <person name="Kai C."/>
            <person name="Sasaki D."/>
            <person name="Tomaru Y."/>
            <person name="Fukuda S."/>
            <person name="Kanamori-Katayama M."/>
            <person name="Suzuki M."/>
            <person name="Aoki J."/>
            <person name="Arakawa T."/>
            <person name="Iida J."/>
            <person name="Imamura K."/>
            <person name="Itoh M."/>
            <person name="Kato T."/>
            <person name="Kawaji H."/>
            <person name="Kawagashira N."/>
            <person name="Kawashima T."/>
            <person name="Kojima M."/>
            <person name="Kondo S."/>
            <person name="Konno H."/>
            <person name="Nakano K."/>
            <person name="Ninomiya N."/>
            <person name="Nishio T."/>
            <person name="Okada M."/>
            <person name="Plessy C."/>
            <person name="Shibata K."/>
            <person name="Shiraki T."/>
            <person name="Suzuki S."/>
            <person name="Tagami M."/>
            <person name="Waki K."/>
            <person name="Watahiki A."/>
            <person name="Okamura-Oho Y."/>
            <person name="Suzuki H."/>
            <person name="Kawai J."/>
            <person name="Hayashizaki Y."/>
        </authorList>
    </citation>
    <scope>NUCLEOTIDE SEQUENCE [LARGE SCALE MRNA]</scope>
    <source>
        <strain>C57BL/6J</strain>
        <tissue>Brain cortex</tissue>
    </source>
</reference>
<reference key="4">
    <citation type="journal article" date="2009" name="PLoS Biol.">
        <title>Lineage-specific biology revealed by a finished genome assembly of the mouse.</title>
        <authorList>
            <person name="Church D.M."/>
            <person name="Goodstadt L."/>
            <person name="Hillier L.W."/>
            <person name="Zody M.C."/>
            <person name="Goldstein S."/>
            <person name="She X."/>
            <person name="Bult C.J."/>
            <person name="Agarwala R."/>
            <person name="Cherry J.L."/>
            <person name="DiCuccio M."/>
            <person name="Hlavina W."/>
            <person name="Kapustin Y."/>
            <person name="Meric P."/>
            <person name="Maglott D."/>
            <person name="Birtle Z."/>
            <person name="Marques A.C."/>
            <person name="Graves T."/>
            <person name="Zhou S."/>
            <person name="Teague B."/>
            <person name="Potamousis K."/>
            <person name="Churas C."/>
            <person name="Place M."/>
            <person name="Herschleb J."/>
            <person name="Runnheim R."/>
            <person name="Forrest D."/>
            <person name="Amos-Landgraf J."/>
            <person name="Schwartz D.C."/>
            <person name="Cheng Z."/>
            <person name="Lindblad-Toh K."/>
            <person name="Eichler E.E."/>
            <person name="Ponting C.P."/>
        </authorList>
    </citation>
    <scope>NUCLEOTIDE SEQUENCE [LARGE SCALE GENOMIC DNA]</scope>
    <source>
        <strain>C57BL/6J</strain>
    </source>
</reference>
<reference key="5">
    <citation type="journal article" date="2004" name="Genome Res.">
        <title>The status, quality, and expansion of the NIH full-length cDNA project: the Mammalian Gene Collection (MGC).</title>
        <authorList>
            <consortium name="The MGC Project Team"/>
        </authorList>
    </citation>
    <scope>NUCLEOTIDE SEQUENCE [LARGE SCALE MRNA] (ISOFORM 1)</scope>
    <source>
        <strain>C57BL/6J</strain>
        <tissue>Brain</tissue>
    </source>
</reference>
<reference key="6">
    <citation type="journal article" date="2007" name="J. Exp. Med.">
        <title>MyD88-5 links mitochondria, microtubules, and JNK3 in neurons and regulates neuronal survival.</title>
        <authorList>
            <person name="Kim Y."/>
            <person name="Zhou P."/>
            <person name="Qian L."/>
            <person name="Chuang J.Z."/>
            <person name="Lee J."/>
            <person name="Li C."/>
            <person name="Iadecola C."/>
            <person name="Nathan C."/>
            <person name="Ding A."/>
        </authorList>
    </citation>
    <scope>FUNCTION</scope>
    <scope>SUBCELLULAR LOCATION</scope>
    <scope>INTERACTION WITH MAPK10</scope>
</reference>
<reference key="7">
    <citation type="journal article" date="2007" name="Sci. STKE">
        <title>Studies of SARM1 uncover similarities between immune and neuronal responses to danger.</title>
        <authorList>
            <person name="Dalod M."/>
        </authorList>
    </citation>
    <scope>REVIEW</scope>
</reference>
<reference key="8">
    <citation type="journal article" date="2009" name="J. Virol.">
        <title>The immune adaptor molecule SARM modulates tumor necrosis factor alpha production and microglia activation in the brainstem and restricts West Nile virus pathogenesis.</title>
        <authorList>
            <person name="Szretter K.J."/>
            <person name="Samuel M.A."/>
            <person name="Gilfillan S."/>
            <person name="Fuchs A."/>
            <person name="Colonna M."/>
            <person name="Diamond M.S."/>
        </authorList>
    </citation>
    <scope>FUNCTION</scope>
</reference>
<reference key="9">
    <citation type="journal article" date="2010" name="Cell">
        <title>A tissue-specific atlas of mouse protein phosphorylation and expression.</title>
        <authorList>
            <person name="Huttlin E.L."/>
            <person name="Jedrychowski M.P."/>
            <person name="Elias J.E."/>
            <person name="Goswami T."/>
            <person name="Rad R."/>
            <person name="Beausoleil S.A."/>
            <person name="Villen J."/>
            <person name="Haas W."/>
            <person name="Sowa M.E."/>
            <person name="Gygi S.P."/>
        </authorList>
    </citation>
    <scope>PHOSPHORYLATION [LARGE SCALE ANALYSIS] AT SER-548 AND SER-558</scope>
    <scope>IDENTIFICATION BY MASS SPECTROMETRY [LARGE SCALE ANALYSIS]</scope>
    <source>
        <tissue>Brain</tissue>
    </source>
</reference>
<reference key="10">
    <citation type="journal article" date="2011" name="J. Cell Biol.">
        <title>Sarm1, a negative regulator of innate immunity, interacts with syndecan-2 and regulates neuronal morphology.</title>
        <authorList>
            <person name="Chen C.Y."/>
            <person name="Lin C.W."/>
            <person name="Chang C.Y."/>
            <person name="Jiang S.T."/>
            <person name="Hsueh Y.P."/>
        </authorList>
    </citation>
    <scope>FUNCTION</scope>
    <scope>IDENTIFICATION BY MASS SPECTROMETRY</scope>
    <scope>INTERACTION WITH SDC2</scope>
    <scope>TISSUE SPECIFICITY</scope>
</reference>
<reference key="11">
    <citation type="journal article" date="2012" name="Science">
        <title>Neuroscience. dSarm-ing axon degeneration.</title>
        <authorList>
            <person name="Yu X.M."/>
            <person name="Luo L."/>
        </authorList>
    </citation>
    <scope>REVIEW</scope>
</reference>
<reference key="12">
    <citation type="journal article" date="2012" name="Science">
        <title>dSarm/Sarm1 is required for activation of an injury-induced axon death pathway.</title>
        <authorList>
            <person name="Osterloh J.M."/>
            <person name="Yang J."/>
            <person name="Rooney T.M."/>
            <person name="Fox A.N."/>
            <person name="Adalbert R."/>
            <person name="Powell E.H."/>
            <person name="Sheehan A.E."/>
            <person name="Avery M.A."/>
            <person name="Hackett R."/>
            <person name="Logan M.A."/>
            <person name="MacDonald J.M."/>
            <person name="Ziegenfuss J.S."/>
            <person name="Milde S."/>
            <person name="Hou Y.J."/>
            <person name="Nathan C."/>
            <person name="Ding A."/>
            <person name="Brown R.H. Jr."/>
            <person name="Conforti L."/>
            <person name="Coleman M."/>
            <person name="Tessier-Lavigne M."/>
            <person name="Zuechner S."/>
            <person name="Freeman M.R."/>
        </authorList>
    </citation>
    <scope>FUNCTION</scope>
    <scope>SUBCELLULAR LOCATION</scope>
    <scope>DISRUPTION PHENOTYPE</scope>
</reference>
<reference key="13">
    <citation type="journal article" date="2015" name="Cell Rep.">
        <title>Absence of SARM1 rescues development and survival of NMNAT2-deficient axons.</title>
        <authorList>
            <person name="Gilley J."/>
            <person name="Orsomando G."/>
            <person name="Nascimento-Ferreira I."/>
            <person name="Coleman M.P."/>
        </authorList>
    </citation>
    <scope>FUNCTION</scope>
    <scope>DISRUPTION PHENOTYPE</scope>
</reference>
<reference key="14">
    <citation type="journal article" date="2015" name="Cell Rep.">
        <title>Wallerian Degeneration Is Executed by an NMN-SARM1-Dependent Late Ca(2+) Influx but Only Modestly Influenced by Mitochondria.</title>
        <authorList>
            <person name="Loreto A."/>
            <person name="Di Stefano M."/>
            <person name="Gering M."/>
            <person name="Conforti L."/>
        </authorList>
    </citation>
    <scope>FUNCTION</scope>
</reference>
<reference key="15">
    <citation type="journal article" date="2015" name="J. Immunol.">
        <title>SARM1, Not MyD88, Mediates TLR7/TLR9-Induced Apoptosis in Neurons.</title>
        <authorList>
            <person name="Mukherjee P."/>
            <person name="Winkler C.W."/>
            <person name="Taylor K.G."/>
            <person name="Woods T.A."/>
            <person name="Nair V."/>
            <person name="Khan B.A."/>
            <person name="Peterson K.E."/>
        </authorList>
    </citation>
    <scope>FUNCTION</scope>
    <scope>SUBCELLULAR LOCATION</scope>
</reference>
<reference key="16">
    <citation type="journal article" date="2016" name="Brain">
        <title>Attenuated traumatic axonal injury and improved functional outcome after traumatic brain injury in mice lacking Sarm1.</title>
        <authorList>
            <person name="Henninger N."/>
            <person name="Bouley J."/>
            <person name="Sikoglu E.M."/>
            <person name="An J."/>
            <person name="Moore C.M."/>
            <person name="King J.A."/>
            <person name="Bowser R."/>
            <person name="Freeman M.R."/>
            <person name="Brown R.H. Jr."/>
        </authorList>
    </citation>
    <scope>DISRUPTION PHENOTYPE</scope>
</reference>
<reference key="17">
    <citation type="journal article" date="2016" name="Brain">
        <title>Prevention of vincristine-induced peripheral neuropathy by genetic deletion of SARM1 in mice.</title>
        <authorList>
            <person name="Geisler S."/>
            <person name="Doan R.A."/>
            <person name="Strickland A."/>
            <person name="Huang X."/>
            <person name="Milbrandt J."/>
            <person name="DiAntonio A."/>
        </authorList>
    </citation>
    <scope>DISRUPTION PHENOTYPE</scope>
</reference>
<reference key="18">
    <citation type="journal article" date="2016" name="Elife">
        <title>NMNAT1 inhibits axon degeneration via blockade of SARM1-mediated NAD+ depletion.</title>
        <authorList>
            <person name="Sasaki Y."/>
            <person name="Nakagawa T."/>
            <person name="Mao X."/>
            <person name="DiAntonio A."/>
            <person name="Milbrandt J."/>
        </authorList>
    </citation>
    <scope>FUNCTION</scope>
</reference>
<reference key="19">
    <citation type="journal article" date="2017" name="Cell Rep.">
        <title>Sarm1 deletion, but not WldS, confers lifelong rescue in a mouse model of severe axonopathy.</title>
        <authorList>
            <person name="Gilley J."/>
            <person name="Ribchester R.R."/>
            <person name="Coleman M.P."/>
        </authorList>
    </citation>
    <scope>DISRUPTION PHENOTYPE</scope>
</reference>
<reference key="20">
    <citation type="journal article" date="2017" name="Neuron">
        <title>The SARM1 Toll/Interleukin-1 receptor domain possesses intrinsic NAD+ cleavage activity that promotes pathological axonal degeneration.</title>
        <authorList>
            <person name="Essuman K."/>
            <person name="Summers D.W."/>
            <person name="Sasaki Y."/>
            <person name="Mao X."/>
            <person name="DiAntonio A."/>
            <person name="Milbrandt J."/>
        </authorList>
    </citation>
    <scope>FUNCTION</scope>
    <scope>CATALYTIC ACTIVITY</scope>
</reference>
<reference key="21">
    <citation type="journal article" date="2019" name="Diabetes">
        <title>Sarm1 gene deficiency attenuates diabetic peripheral neuropathy in mice.</title>
        <authorList>
            <person name="Cheng Y."/>
            <person name="Liu J."/>
            <person name="Luan Y."/>
            <person name="Liu Z."/>
            <person name="Lai H."/>
            <person name="Zhong W."/>
            <person name="Yang Y."/>
            <person name="Yu H."/>
            <person name="Feng N."/>
            <person name="Wang H."/>
            <person name="Huang R."/>
            <person name="He Z."/>
            <person name="Yan M."/>
            <person name="Zhang F."/>
            <person name="Sun Y.G."/>
            <person name="Yin H."/>
            <person name="Guo F."/>
            <person name="Zhai Q."/>
        </authorList>
    </citation>
    <scope>DISRUPTION PHENOTYPE</scope>
</reference>
<reference key="22">
    <citation type="journal article" date="2020" name="PLoS ONE">
        <title>Sarm1 knockout protects against early but not late axonal degeneration in experimental allergic encephalomyelitis.</title>
        <authorList>
            <person name="Viar K."/>
            <person name="Njoku D."/>
            <person name="Secor McVoy J."/>
            <person name="Oh U."/>
        </authorList>
    </citation>
    <scope>DISRUPTION PHENOTYPE</scope>
</reference>
<reference key="23">
    <citation type="journal article" date="2020" name="Life. Sci Alliance">
        <title>SARM1 deficiency promotes rod and cone photoreceptor cell survival in a model of retinal degeneration.</title>
        <authorList>
            <person name="Ozaki E."/>
            <person name="Gibbons L."/>
            <person name="Neto N.G."/>
            <person name="Kenna P."/>
            <person name="Carty M."/>
            <person name="Humphries M."/>
            <person name="Humphries P."/>
            <person name="Campbell M."/>
            <person name="Monaghan M."/>
            <person name="Bowie A."/>
            <person name="Doyle S.L."/>
        </authorList>
    </citation>
    <scope>FUNCTION</scope>
    <scope>DISRUPTION PHENOTYPE</scope>
    <scope>TISSUE SPECIFICITY</scope>
</reference>
<protein>
    <recommendedName>
        <fullName evidence="23">NAD(+) hydrolase SARM1</fullName>
        <shortName evidence="23">NADase SARM1</shortName>
        <ecNumber evidence="16">3.2.2.6</ecNumber>
    </recommendedName>
    <alternativeName>
        <fullName evidence="23">NADP(+) hydrolase SARM1</fullName>
        <ecNumber evidence="1">3.2.2.-</ecNumber>
    </alternativeName>
    <alternativeName>
        <fullName evidence="22">Sterile alpha and TIR motif-containing protein 1</fullName>
    </alternativeName>
</protein>